<gene>
    <name type="primary">pss</name>
</gene>
<evidence type="ECO:0000305" key="1"/>
<protein>
    <recommendedName>
        <fullName>Exopolysaccharide production protein PSS</fullName>
    </recommendedName>
</protein>
<comment type="similarity">
    <text evidence="1">Belongs to the bacterial sugar transferase family.</text>
</comment>
<keyword id="KW-0270">Exopolysaccharide synthesis</keyword>
<keyword id="KW-0536">Nodulation</keyword>
<accession>P10498</accession>
<sequence>MDLVLKRAFDIFSSLSALLVLAPFLLFVALLIKLDSPGPVLFKQTRWGKNCKAIKVYKFRSMRTDLCDVSGVAQTVKNDPRITRIGAILRRTNVDELPQLLNVLLGHMSVVGPRCHAIGMRAGGMLYEELVPEYHQRHAMRPGMTGLAQMRGLRGPTDRPAKARARIASDLYYVGNFSIVMDMRIIFGTVVSELTRGKGF</sequence>
<organism>
    <name type="scientific">Rhizobium leguminosarum bv. phaseoli</name>
    <dbReference type="NCBI Taxonomy" id="385"/>
    <lineage>
        <taxon>Bacteria</taxon>
        <taxon>Pseudomonadati</taxon>
        <taxon>Pseudomonadota</taxon>
        <taxon>Alphaproteobacteria</taxon>
        <taxon>Hyphomicrobiales</taxon>
        <taxon>Rhizobiaceae</taxon>
        <taxon>Rhizobium/Agrobacterium group</taxon>
        <taxon>Rhizobium</taxon>
    </lineage>
</organism>
<proteinExistence type="inferred from homology"/>
<name>PSS_RHILP</name>
<dbReference type="EMBL" id="X12568">
    <property type="protein sequence ID" value="CAA31079.1"/>
    <property type="molecule type" value="Genomic_DNA"/>
</dbReference>
<dbReference type="PIR" id="S03811">
    <property type="entry name" value="S03811"/>
</dbReference>
<dbReference type="SMR" id="P10498"/>
<dbReference type="GO" id="GO:0016780">
    <property type="term" value="F:phosphotransferase activity, for other substituted phosphate groups"/>
    <property type="evidence" value="ECO:0007669"/>
    <property type="project" value="TreeGrafter"/>
</dbReference>
<dbReference type="GO" id="GO:0000271">
    <property type="term" value="P:polysaccharide biosynthetic process"/>
    <property type="evidence" value="ECO:0007669"/>
    <property type="project" value="UniProtKB-KW"/>
</dbReference>
<dbReference type="InterPro" id="IPR003362">
    <property type="entry name" value="Bact_transf"/>
</dbReference>
<dbReference type="PANTHER" id="PTHR30576">
    <property type="entry name" value="COLANIC BIOSYNTHESIS UDP-GLUCOSE LIPID CARRIER TRANSFERASE"/>
    <property type="match status" value="1"/>
</dbReference>
<dbReference type="PANTHER" id="PTHR30576:SF0">
    <property type="entry name" value="UNDECAPRENYL-PHOSPHATE N-ACETYLGALACTOSAMINYL 1-PHOSPHATE TRANSFERASE-RELATED"/>
    <property type="match status" value="1"/>
</dbReference>
<dbReference type="Pfam" id="PF02397">
    <property type="entry name" value="Bac_transf"/>
    <property type="match status" value="1"/>
</dbReference>
<feature type="chain" id="PRO_0000166467" description="Exopolysaccharide production protein PSS">
    <location>
        <begin position="1"/>
        <end position="200"/>
    </location>
</feature>
<reference key="1">
    <citation type="journal article" date="1988" name="Mol. Gen. Genet.">
        <title>Analysis of pss genes of Rhizobium leguminosarum required for exopolysaccharide synthesis and nodulation of peas: their primary structure and their interaction with psi and other nodulation genes.</title>
        <authorList>
            <person name="Borthakur D."/>
            <person name="Barker R.F."/>
            <person name="Latchford J.W."/>
            <person name="Rossen L."/>
            <person name="Johnston A.W.B."/>
        </authorList>
    </citation>
    <scope>NUCLEOTIDE SEQUENCE [GENOMIC DNA]</scope>
    <source>
        <strain>8002</strain>
    </source>
</reference>